<feature type="chain" id="PRO_0000252919" description="Fluoride-specific ion channel FluC">
    <location>
        <begin position="1"/>
        <end position="123"/>
    </location>
</feature>
<feature type="transmembrane region" description="Helical" evidence="1">
    <location>
        <begin position="1"/>
        <end position="21"/>
    </location>
</feature>
<feature type="transmembrane region" description="Helical" evidence="1">
    <location>
        <begin position="32"/>
        <end position="52"/>
    </location>
</feature>
<feature type="transmembrane region" description="Helical" evidence="1">
    <location>
        <begin position="66"/>
        <end position="86"/>
    </location>
</feature>
<feature type="transmembrane region" description="Helical" evidence="1">
    <location>
        <begin position="99"/>
        <end position="119"/>
    </location>
</feature>
<feature type="binding site" evidence="1">
    <location>
        <position position="73"/>
    </location>
    <ligand>
        <name>Na(+)</name>
        <dbReference type="ChEBI" id="CHEBI:29101"/>
        <note>structural</note>
    </ligand>
</feature>
<feature type="binding site" evidence="1">
    <location>
        <position position="76"/>
    </location>
    <ligand>
        <name>Na(+)</name>
        <dbReference type="ChEBI" id="CHEBI:29101"/>
        <note>structural</note>
    </ligand>
</feature>
<reference key="1">
    <citation type="submission" date="2006-03" db="EMBL/GenBank/DDBJ databases">
        <title>Complete sequence of chromosome of Psychrobacter cryohalolentis K5.</title>
        <authorList>
            <consortium name="US DOE Joint Genome Institute"/>
            <person name="Copeland A."/>
            <person name="Lucas S."/>
            <person name="Lapidus A."/>
            <person name="Barry K."/>
            <person name="Detter J.C."/>
            <person name="Glavina T."/>
            <person name="Hammon N."/>
            <person name="Israni S."/>
            <person name="Dalin E."/>
            <person name="Tice H."/>
            <person name="Pitluck S."/>
            <person name="Brettin T."/>
            <person name="Bruce D."/>
            <person name="Han C."/>
            <person name="Tapia R."/>
            <person name="Sims D.R."/>
            <person name="Gilna P."/>
            <person name="Schmutz J."/>
            <person name="Larimer F."/>
            <person name="Land M."/>
            <person name="Hauser L."/>
            <person name="Kyrpides N."/>
            <person name="Kim E."/>
            <person name="Richardson P."/>
        </authorList>
    </citation>
    <scope>NUCLEOTIDE SEQUENCE [LARGE SCALE GENOMIC DNA]</scope>
    <source>
        <strain>ATCC BAA-1226 / DSM 17306 / VKM B-2378 / K5</strain>
    </source>
</reference>
<keyword id="KW-0997">Cell inner membrane</keyword>
<keyword id="KW-1003">Cell membrane</keyword>
<keyword id="KW-0407">Ion channel</keyword>
<keyword id="KW-0406">Ion transport</keyword>
<keyword id="KW-0472">Membrane</keyword>
<keyword id="KW-0479">Metal-binding</keyword>
<keyword id="KW-0915">Sodium</keyword>
<keyword id="KW-0812">Transmembrane</keyword>
<keyword id="KW-1133">Transmembrane helix</keyword>
<keyword id="KW-0813">Transport</keyword>
<organism>
    <name type="scientific">Psychrobacter cryohalolentis (strain ATCC BAA-1226 / DSM 17306 / VKM B-2378 / K5)</name>
    <dbReference type="NCBI Taxonomy" id="335284"/>
    <lineage>
        <taxon>Bacteria</taxon>
        <taxon>Pseudomonadati</taxon>
        <taxon>Pseudomonadota</taxon>
        <taxon>Gammaproteobacteria</taxon>
        <taxon>Moraxellales</taxon>
        <taxon>Moraxellaceae</taxon>
        <taxon>Psychrobacter</taxon>
    </lineage>
</organism>
<proteinExistence type="inferred from homology"/>
<accession>Q1QE84</accession>
<comment type="function">
    <text evidence="1">Fluoride-specific ion channel. Important for reducing fluoride concentration in the cell, thus reducing its toxicity.</text>
</comment>
<comment type="catalytic activity">
    <reaction evidence="1">
        <text>fluoride(in) = fluoride(out)</text>
        <dbReference type="Rhea" id="RHEA:76159"/>
        <dbReference type="ChEBI" id="CHEBI:17051"/>
    </reaction>
    <physiologicalReaction direction="left-to-right" evidence="1">
        <dbReference type="Rhea" id="RHEA:76160"/>
    </physiologicalReaction>
</comment>
<comment type="activity regulation">
    <text evidence="1">Na(+) is not transported, but it plays an essential structural role and its presence is essential for fluoride channel function.</text>
</comment>
<comment type="subcellular location">
    <subcellularLocation>
        <location evidence="1">Cell inner membrane</location>
        <topology evidence="1">Multi-pass membrane protein</topology>
    </subcellularLocation>
</comment>
<comment type="similarity">
    <text evidence="1">Belongs to the fluoride channel Fluc/FEX (TC 1.A.43) family.</text>
</comment>
<dbReference type="EMBL" id="CP000323">
    <property type="protein sequence ID" value="ABE74019.1"/>
    <property type="molecule type" value="Genomic_DNA"/>
</dbReference>
<dbReference type="RefSeq" id="WP_011512607.1">
    <property type="nucleotide sequence ID" value="NC_007969.1"/>
</dbReference>
<dbReference type="SMR" id="Q1QE84"/>
<dbReference type="STRING" id="335284.Pcryo_0235"/>
<dbReference type="KEGG" id="pcr:Pcryo_0235"/>
<dbReference type="eggNOG" id="COG0239">
    <property type="taxonomic scope" value="Bacteria"/>
</dbReference>
<dbReference type="HOGENOM" id="CLU_114342_3_3_6"/>
<dbReference type="Proteomes" id="UP000002425">
    <property type="component" value="Chromosome"/>
</dbReference>
<dbReference type="GO" id="GO:0005886">
    <property type="term" value="C:plasma membrane"/>
    <property type="evidence" value="ECO:0007669"/>
    <property type="project" value="UniProtKB-SubCell"/>
</dbReference>
<dbReference type="GO" id="GO:0062054">
    <property type="term" value="F:fluoride channel activity"/>
    <property type="evidence" value="ECO:0007669"/>
    <property type="project" value="UniProtKB-UniRule"/>
</dbReference>
<dbReference type="GO" id="GO:0046872">
    <property type="term" value="F:metal ion binding"/>
    <property type="evidence" value="ECO:0007669"/>
    <property type="project" value="UniProtKB-KW"/>
</dbReference>
<dbReference type="GO" id="GO:0140114">
    <property type="term" value="P:cellular detoxification of fluoride"/>
    <property type="evidence" value="ECO:0007669"/>
    <property type="project" value="UniProtKB-UniRule"/>
</dbReference>
<dbReference type="HAMAP" id="MF_00454">
    <property type="entry name" value="FluC"/>
    <property type="match status" value="1"/>
</dbReference>
<dbReference type="InterPro" id="IPR003691">
    <property type="entry name" value="FluC"/>
</dbReference>
<dbReference type="PANTHER" id="PTHR28259">
    <property type="entry name" value="FLUORIDE EXPORT PROTEIN 1-RELATED"/>
    <property type="match status" value="1"/>
</dbReference>
<dbReference type="PANTHER" id="PTHR28259:SF1">
    <property type="entry name" value="FLUORIDE EXPORT PROTEIN 1-RELATED"/>
    <property type="match status" value="1"/>
</dbReference>
<dbReference type="Pfam" id="PF02537">
    <property type="entry name" value="CRCB"/>
    <property type="match status" value="1"/>
</dbReference>
<gene>
    <name evidence="1" type="primary">fluC</name>
    <name evidence="1" type="synonym">crcB</name>
    <name type="ordered locus">Pcryo_0235</name>
</gene>
<name>FLUC_PSYCK</name>
<protein>
    <recommendedName>
        <fullName evidence="1">Fluoride-specific ion channel FluC</fullName>
    </recommendedName>
</protein>
<evidence type="ECO:0000255" key="1">
    <source>
        <dbReference type="HAMAP-Rule" id="MF_00454"/>
    </source>
</evidence>
<sequence>MQWLAIGLGAAIGACLRGWLARFNPMHHWIPLGTLGANVLGGLLIGLALVWFERVGSGLSPNIRLFVITGFLGGLTTFSTFSVEVFTFIHNGKLLAGLGLIGLHVGLTLLATALGFYFFKLVL</sequence>